<keyword id="KW-0963">Cytoplasm</keyword>
<keyword id="KW-0255">Endonuclease</keyword>
<keyword id="KW-0378">Hydrolase</keyword>
<keyword id="KW-0464">Manganese</keyword>
<keyword id="KW-0479">Metal-binding</keyword>
<keyword id="KW-0540">Nuclease</keyword>
<sequence>MNTSISEIQRFLSMIAFEKELVSEDFSVVAGIDEAGRGPLAGPVVASACILPKGKVFPGVNDSKKLSPKQRAQVRDALMQDPEVCFGIGVISVERIDQVNILEATKEAMLQAISSLPISPDILLVDGLYLPHDIPCKKIIQGDAKSASIAAASILAKEHRDDLMLQLHRLYPEYGFDRHKGYGTSLHVEAIRRYGPSPCHRKSFSPIKQMCAIV</sequence>
<comment type="function">
    <text evidence="1">Endonuclease that specifically degrades the RNA of RNA-DNA hybrids.</text>
</comment>
<comment type="catalytic activity">
    <reaction>
        <text>Endonucleolytic cleavage to 5'-phosphomonoester.</text>
        <dbReference type="EC" id="3.1.26.4"/>
    </reaction>
</comment>
<comment type="cofactor">
    <cofactor evidence="1">
        <name>Mn(2+)</name>
        <dbReference type="ChEBI" id="CHEBI:29035"/>
    </cofactor>
    <cofactor evidence="1">
        <name>Mg(2+)</name>
        <dbReference type="ChEBI" id="CHEBI:18420"/>
    </cofactor>
    <text evidence="1">Manganese or magnesium. Binds 1 divalent metal ion per monomer in the absence of substrate. May bind a second metal ion after substrate binding.</text>
</comment>
<comment type="subcellular location">
    <subcellularLocation>
        <location evidence="3">Cytoplasm</location>
    </subcellularLocation>
</comment>
<comment type="similarity">
    <text evidence="3">Belongs to the RNase HII family.</text>
</comment>
<reference key="1">
    <citation type="journal article" date="1999" name="Nat. Genet.">
        <title>Comparative genomes of Chlamydia pneumoniae and C. trachomatis.</title>
        <authorList>
            <person name="Kalman S."/>
            <person name="Mitchell W.P."/>
            <person name="Marathe R."/>
            <person name="Lammel C.J."/>
            <person name="Fan J."/>
            <person name="Hyman R.W."/>
            <person name="Olinger L."/>
            <person name="Grimwood J."/>
            <person name="Davis R.W."/>
            <person name="Stephens R.S."/>
        </authorList>
    </citation>
    <scope>NUCLEOTIDE SEQUENCE [LARGE SCALE GENOMIC DNA]</scope>
    <source>
        <strain>CWL029</strain>
    </source>
</reference>
<reference key="2">
    <citation type="journal article" date="2000" name="Nucleic Acids Res.">
        <title>Genome sequences of Chlamydia trachomatis MoPn and Chlamydia pneumoniae AR39.</title>
        <authorList>
            <person name="Read T.D."/>
            <person name="Brunham R.C."/>
            <person name="Shen C."/>
            <person name="Gill S.R."/>
            <person name="Heidelberg J.F."/>
            <person name="White O."/>
            <person name="Hickey E.K."/>
            <person name="Peterson J.D."/>
            <person name="Utterback T.R."/>
            <person name="Berry K.J."/>
            <person name="Bass S."/>
            <person name="Linher K.D."/>
            <person name="Weidman J.F."/>
            <person name="Khouri H.M."/>
            <person name="Craven B."/>
            <person name="Bowman C."/>
            <person name="Dodson R.J."/>
            <person name="Gwinn M.L."/>
            <person name="Nelson W.C."/>
            <person name="DeBoy R.T."/>
            <person name="Kolonay J.F."/>
            <person name="McClarty G."/>
            <person name="Salzberg S.L."/>
            <person name="Eisen J.A."/>
            <person name="Fraser C.M."/>
        </authorList>
    </citation>
    <scope>NUCLEOTIDE SEQUENCE [LARGE SCALE GENOMIC DNA]</scope>
    <source>
        <strain>AR39</strain>
    </source>
</reference>
<reference key="3">
    <citation type="journal article" date="2000" name="Nucleic Acids Res.">
        <title>Comparison of whole genome sequences of Chlamydia pneumoniae J138 from Japan and CWL029 from USA.</title>
        <authorList>
            <person name="Shirai M."/>
            <person name="Hirakawa H."/>
            <person name="Kimoto M."/>
            <person name="Tabuchi M."/>
            <person name="Kishi F."/>
            <person name="Ouchi K."/>
            <person name="Shiba T."/>
            <person name="Ishii K."/>
            <person name="Hattori M."/>
            <person name="Kuhara S."/>
            <person name="Nakazawa T."/>
        </authorList>
    </citation>
    <scope>NUCLEOTIDE SEQUENCE [LARGE SCALE GENOMIC DNA]</scope>
    <source>
        <strain>J138</strain>
    </source>
</reference>
<reference key="4">
    <citation type="submission" date="2002-05" db="EMBL/GenBank/DDBJ databases">
        <title>The genome sequence of Chlamydia pneumoniae TW183 and comparison with other Chlamydia strains based on whole genome sequence analysis.</title>
        <authorList>
            <person name="Geng M.M."/>
            <person name="Schuhmacher A."/>
            <person name="Muehldorfer I."/>
            <person name="Bensch K.W."/>
            <person name="Schaefer K.P."/>
            <person name="Schneider S."/>
            <person name="Pohl T."/>
            <person name="Essig A."/>
            <person name="Marre R."/>
            <person name="Melchers K."/>
        </authorList>
    </citation>
    <scope>NUCLEOTIDE SEQUENCE [LARGE SCALE GENOMIC DNA]</scope>
    <source>
        <strain>TW-183</strain>
    </source>
</reference>
<proteinExistence type="inferred from homology"/>
<evidence type="ECO:0000250" key="1"/>
<evidence type="ECO:0000255" key="2">
    <source>
        <dbReference type="PROSITE-ProRule" id="PRU01319"/>
    </source>
</evidence>
<evidence type="ECO:0000305" key="3"/>
<gene>
    <name type="primary">rnhB</name>
    <name type="ordered locus">CPn_0119</name>
    <name type="ordered locus">CP_0654</name>
    <name type="ordered locus">CpB0120</name>
</gene>
<name>RNH2_CHLPN</name>
<organism>
    <name type="scientific">Chlamydia pneumoniae</name>
    <name type="common">Chlamydophila pneumoniae</name>
    <dbReference type="NCBI Taxonomy" id="83558"/>
    <lineage>
        <taxon>Bacteria</taxon>
        <taxon>Pseudomonadati</taxon>
        <taxon>Chlamydiota</taxon>
        <taxon>Chlamydiia</taxon>
        <taxon>Chlamydiales</taxon>
        <taxon>Chlamydiaceae</taxon>
        <taxon>Chlamydia/Chlamydophila group</taxon>
        <taxon>Chlamydia</taxon>
    </lineage>
</organism>
<dbReference type="EC" id="3.1.26.4"/>
<dbReference type="EMBL" id="AE001363">
    <property type="protein sequence ID" value="AAD18272.1"/>
    <property type="molecule type" value="Genomic_DNA"/>
</dbReference>
<dbReference type="EMBL" id="AE002161">
    <property type="protein sequence ID" value="AAF73691.1"/>
    <property type="molecule type" value="Genomic_DNA"/>
</dbReference>
<dbReference type="EMBL" id="BA000008">
    <property type="protein sequence ID" value="BAA98330.1"/>
    <property type="molecule type" value="Genomic_DNA"/>
</dbReference>
<dbReference type="EMBL" id="AE009440">
    <property type="protein sequence ID" value="AAP98053.1"/>
    <property type="molecule type" value="Genomic_DNA"/>
</dbReference>
<dbReference type="PIR" id="E72117">
    <property type="entry name" value="E72117"/>
</dbReference>
<dbReference type="PIR" id="H86505">
    <property type="entry name" value="H86505"/>
</dbReference>
<dbReference type="RefSeq" id="NP_224327.1">
    <property type="nucleotide sequence ID" value="NC_000922.1"/>
</dbReference>
<dbReference type="RefSeq" id="WP_010882769.1">
    <property type="nucleotide sequence ID" value="NZ_LN847257.1"/>
</dbReference>
<dbReference type="SMR" id="Q9Z962"/>
<dbReference type="STRING" id="406984.CPK_ORF00631"/>
<dbReference type="GeneID" id="45050164"/>
<dbReference type="KEGG" id="cpa:CP_0654"/>
<dbReference type="KEGG" id="cpj:rnhB_1"/>
<dbReference type="KEGG" id="cpn:CPn_0119"/>
<dbReference type="KEGG" id="cpt:CpB0120"/>
<dbReference type="PATRIC" id="fig|115713.3.peg.134"/>
<dbReference type="eggNOG" id="COG0164">
    <property type="taxonomic scope" value="Bacteria"/>
</dbReference>
<dbReference type="HOGENOM" id="CLU_036532_3_2_0"/>
<dbReference type="OrthoDB" id="9803420at2"/>
<dbReference type="Proteomes" id="UP000000583">
    <property type="component" value="Chromosome"/>
</dbReference>
<dbReference type="Proteomes" id="UP000000801">
    <property type="component" value="Chromosome"/>
</dbReference>
<dbReference type="GO" id="GO:0005737">
    <property type="term" value="C:cytoplasm"/>
    <property type="evidence" value="ECO:0007669"/>
    <property type="project" value="UniProtKB-SubCell"/>
</dbReference>
<dbReference type="GO" id="GO:0032299">
    <property type="term" value="C:ribonuclease H2 complex"/>
    <property type="evidence" value="ECO:0007669"/>
    <property type="project" value="TreeGrafter"/>
</dbReference>
<dbReference type="GO" id="GO:0030145">
    <property type="term" value="F:manganese ion binding"/>
    <property type="evidence" value="ECO:0007669"/>
    <property type="project" value="UniProtKB-UniRule"/>
</dbReference>
<dbReference type="GO" id="GO:0003723">
    <property type="term" value="F:RNA binding"/>
    <property type="evidence" value="ECO:0007669"/>
    <property type="project" value="InterPro"/>
</dbReference>
<dbReference type="GO" id="GO:0004523">
    <property type="term" value="F:RNA-DNA hybrid ribonuclease activity"/>
    <property type="evidence" value="ECO:0007669"/>
    <property type="project" value="UniProtKB-UniRule"/>
</dbReference>
<dbReference type="GO" id="GO:0043137">
    <property type="term" value="P:DNA replication, removal of RNA primer"/>
    <property type="evidence" value="ECO:0007669"/>
    <property type="project" value="TreeGrafter"/>
</dbReference>
<dbReference type="GO" id="GO:0006298">
    <property type="term" value="P:mismatch repair"/>
    <property type="evidence" value="ECO:0007669"/>
    <property type="project" value="TreeGrafter"/>
</dbReference>
<dbReference type="CDD" id="cd07182">
    <property type="entry name" value="RNase_HII_bacteria_HII_like"/>
    <property type="match status" value="1"/>
</dbReference>
<dbReference type="FunFam" id="3.30.420.10:FF:000006">
    <property type="entry name" value="Ribonuclease HII"/>
    <property type="match status" value="1"/>
</dbReference>
<dbReference type="Gene3D" id="3.30.420.10">
    <property type="entry name" value="Ribonuclease H-like superfamily/Ribonuclease H"/>
    <property type="match status" value="1"/>
</dbReference>
<dbReference type="HAMAP" id="MF_00052_B">
    <property type="entry name" value="RNase_HII_B"/>
    <property type="match status" value="1"/>
</dbReference>
<dbReference type="InterPro" id="IPR022898">
    <property type="entry name" value="RNase_HII"/>
</dbReference>
<dbReference type="InterPro" id="IPR001352">
    <property type="entry name" value="RNase_HII/HIII"/>
</dbReference>
<dbReference type="InterPro" id="IPR024567">
    <property type="entry name" value="RNase_HII/HIII_dom"/>
</dbReference>
<dbReference type="InterPro" id="IPR012337">
    <property type="entry name" value="RNaseH-like_sf"/>
</dbReference>
<dbReference type="InterPro" id="IPR036397">
    <property type="entry name" value="RNaseH_sf"/>
</dbReference>
<dbReference type="NCBIfam" id="NF000594">
    <property type="entry name" value="PRK00015.1-1"/>
    <property type="match status" value="1"/>
</dbReference>
<dbReference type="NCBIfam" id="NF000595">
    <property type="entry name" value="PRK00015.1-3"/>
    <property type="match status" value="1"/>
</dbReference>
<dbReference type="PANTHER" id="PTHR10954">
    <property type="entry name" value="RIBONUCLEASE H2 SUBUNIT A"/>
    <property type="match status" value="1"/>
</dbReference>
<dbReference type="PANTHER" id="PTHR10954:SF18">
    <property type="entry name" value="RIBONUCLEASE HII"/>
    <property type="match status" value="1"/>
</dbReference>
<dbReference type="Pfam" id="PF01351">
    <property type="entry name" value="RNase_HII"/>
    <property type="match status" value="1"/>
</dbReference>
<dbReference type="SUPFAM" id="SSF53098">
    <property type="entry name" value="Ribonuclease H-like"/>
    <property type="match status" value="1"/>
</dbReference>
<dbReference type="PROSITE" id="PS51975">
    <property type="entry name" value="RNASE_H_2"/>
    <property type="match status" value="1"/>
</dbReference>
<feature type="chain" id="PRO_0000111560" description="Ribonuclease HII">
    <location>
        <begin position="1"/>
        <end position="214"/>
    </location>
</feature>
<feature type="domain" description="RNase H type-2" evidence="2">
    <location>
        <begin position="27"/>
        <end position="214"/>
    </location>
</feature>
<feature type="binding site" evidence="1">
    <location>
        <position position="33"/>
    </location>
    <ligand>
        <name>a divalent metal cation</name>
        <dbReference type="ChEBI" id="CHEBI:60240"/>
    </ligand>
</feature>
<feature type="binding site" evidence="1">
    <location>
        <position position="34"/>
    </location>
    <ligand>
        <name>a divalent metal cation</name>
        <dbReference type="ChEBI" id="CHEBI:60240"/>
    </ligand>
</feature>
<feature type="binding site" evidence="1">
    <location>
        <position position="126"/>
    </location>
    <ligand>
        <name>a divalent metal cation</name>
        <dbReference type="ChEBI" id="CHEBI:60240"/>
    </ligand>
</feature>
<accession>Q9Z962</accession>
<accession>Q9JQ88</accession>
<protein>
    <recommendedName>
        <fullName>Ribonuclease HII</fullName>
        <shortName>RNase HII</shortName>
        <ecNumber>3.1.26.4</ecNumber>
    </recommendedName>
</protein>